<evidence type="ECO:0000250" key="1"/>
<evidence type="ECO:0000255" key="2">
    <source>
        <dbReference type="PROSITE-ProRule" id="PRU00080"/>
    </source>
</evidence>
<evidence type="ECO:0000256" key="3">
    <source>
        <dbReference type="SAM" id="MobiDB-lite"/>
    </source>
</evidence>
<sequence length="555" mass="62581">MFTPQSISQRSNGLHFKRPVTYKTTMLHPVMSVSSRSSQEESLMTVGESVSSLSMQEQQTESDTDASHSDNEENDNVDSVSNFDNLSNSIHLISLNEVDELLEDHQSTIQSSLNRGLTCTNLPDHSIKSGVTRSTVSTVRPTSKQHHQPYKYRSLLLPFEPSRGSRSMRRKIGGSRGSSLASVRRIFRSTHHLQPHKDLNSLPHEIMSKIVSHLDQRDVTMCLYVNKNMYSTAVRQLYKEPFFSSTYRFAQFVTQVSHNDELASYVQKLDLSTIRPGFESDEDDSAIFENEPIEDDAVLAGWRDWKLRGDPLYSRQFKRLTKHVSNSSSSLSCSRTSSNSNSSTESKPVKKRRSVTTAIRESRIWLSFYKKNKLYQASEEVLEALRKQNSPLVRPKVPFSTAHPISSPFLRQYSTSKDVPVGHLIHVVAACKNLTDIDISFLPLAEDYAVAGSSSYLPTASSGLLFVSDVAKLYTWKPDEIVPVSPSDLVVAMLQLRDLQVLKLRKLMWVKRDSVVRLVNENNSLVHLDLTDSGLVRGARWAIAGSVEELRQTLK</sequence>
<dbReference type="EMBL" id="CR382128">
    <property type="protein sequence ID" value="CAG82590.1"/>
    <property type="molecule type" value="Genomic_DNA"/>
</dbReference>
<dbReference type="RefSeq" id="XP_500375.1">
    <property type="nucleotide sequence ID" value="XM_500375.1"/>
</dbReference>
<dbReference type="STRING" id="284591.Q6CG37"/>
<dbReference type="EnsemblFungi" id="CAG82590">
    <property type="protein sequence ID" value="CAG82590"/>
    <property type="gene ID" value="YALI0_B01166g"/>
</dbReference>
<dbReference type="KEGG" id="yli:2907522"/>
<dbReference type="VEuPathDB" id="FungiDB:YALI0_B01166g"/>
<dbReference type="HOGENOM" id="CLU_491091_0_0_1"/>
<dbReference type="InParanoid" id="Q6CG37"/>
<dbReference type="OMA" id="LASWRDW"/>
<dbReference type="OrthoDB" id="3180at4891"/>
<dbReference type="Proteomes" id="UP000001300">
    <property type="component" value="Chromosome B"/>
</dbReference>
<dbReference type="CDD" id="cd22143">
    <property type="entry name" value="F-box_ScMDM30-like"/>
    <property type="match status" value="1"/>
</dbReference>
<dbReference type="InterPro" id="IPR036047">
    <property type="entry name" value="F-box-like_dom_sf"/>
</dbReference>
<dbReference type="InterPro" id="IPR001810">
    <property type="entry name" value="F-box_dom"/>
</dbReference>
<dbReference type="Pfam" id="PF12937">
    <property type="entry name" value="F-box-like"/>
    <property type="match status" value="1"/>
</dbReference>
<dbReference type="SUPFAM" id="SSF81383">
    <property type="entry name" value="F-box domain"/>
    <property type="match status" value="1"/>
</dbReference>
<dbReference type="PROSITE" id="PS50181">
    <property type="entry name" value="FBOX"/>
    <property type="match status" value="1"/>
</dbReference>
<gene>
    <name type="primary">COS111</name>
    <name type="ordered locus">YALI0B01166g</name>
</gene>
<reference key="1">
    <citation type="journal article" date="2004" name="Nature">
        <title>Genome evolution in yeasts.</title>
        <authorList>
            <person name="Dujon B."/>
            <person name="Sherman D."/>
            <person name="Fischer G."/>
            <person name="Durrens P."/>
            <person name="Casaregola S."/>
            <person name="Lafontaine I."/>
            <person name="de Montigny J."/>
            <person name="Marck C."/>
            <person name="Neuveglise C."/>
            <person name="Talla E."/>
            <person name="Goffard N."/>
            <person name="Frangeul L."/>
            <person name="Aigle M."/>
            <person name="Anthouard V."/>
            <person name="Babour A."/>
            <person name="Barbe V."/>
            <person name="Barnay S."/>
            <person name="Blanchin S."/>
            <person name="Beckerich J.-M."/>
            <person name="Beyne E."/>
            <person name="Bleykasten C."/>
            <person name="Boisrame A."/>
            <person name="Boyer J."/>
            <person name="Cattolico L."/>
            <person name="Confanioleri F."/>
            <person name="de Daruvar A."/>
            <person name="Despons L."/>
            <person name="Fabre E."/>
            <person name="Fairhead C."/>
            <person name="Ferry-Dumazet H."/>
            <person name="Groppi A."/>
            <person name="Hantraye F."/>
            <person name="Hennequin C."/>
            <person name="Jauniaux N."/>
            <person name="Joyet P."/>
            <person name="Kachouri R."/>
            <person name="Kerrest A."/>
            <person name="Koszul R."/>
            <person name="Lemaire M."/>
            <person name="Lesur I."/>
            <person name="Ma L."/>
            <person name="Muller H."/>
            <person name="Nicaud J.-M."/>
            <person name="Nikolski M."/>
            <person name="Oztas S."/>
            <person name="Ozier-Kalogeropoulos O."/>
            <person name="Pellenz S."/>
            <person name="Potier S."/>
            <person name="Richard G.-F."/>
            <person name="Straub M.-L."/>
            <person name="Suleau A."/>
            <person name="Swennen D."/>
            <person name="Tekaia F."/>
            <person name="Wesolowski-Louvel M."/>
            <person name="Westhof E."/>
            <person name="Wirth B."/>
            <person name="Zeniou-Meyer M."/>
            <person name="Zivanovic Y."/>
            <person name="Bolotin-Fukuhara M."/>
            <person name="Thierry A."/>
            <person name="Bouchier C."/>
            <person name="Caudron B."/>
            <person name="Scarpelli C."/>
            <person name="Gaillardin C."/>
            <person name="Weissenbach J."/>
            <person name="Wincker P."/>
            <person name="Souciet J.-L."/>
        </authorList>
    </citation>
    <scope>NUCLEOTIDE SEQUENCE [LARGE SCALE GENOMIC DNA]</scope>
    <source>
        <strain>CLIB 122 / E 150</strain>
    </source>
</reference>
<accession>Q6CG37</accession>
<protein>
    <recommendedName>
        <fullName>F-box protein COS111</fullName>
    </recommendedName>
</protein>
<feature type="chain" id="PRO_0000279196" description="F-box protein COS111">
    <location>
        <begin position="1"/>
        <end position="555"/>
    </location>
</feature>
<feature type="domain" description="F-box" evidence="2">
    <location>
        <begin position="196"/>
        <end position="246"/>
    </location>
</feature>
<feature type="region of interest" description="Disordered" evidence="3">
    <location>
        <begin position="31"/>
        <end position="82"/>
    </location>
</feature>
<feature type="region of interest" description="Disordered" evidence="3">
    <location>
        <begin position="124"/>
        <end position="147"/>
    </location>
</feature>
<feature type="region of interest" description="Disordered" evidence="3">
    <location>
        <begin position="327"/>
        <end position="354"/>
    </location>
</feature>
<feature type="compositionally biased region" description="Low complexity" evidence="3">
    <location>
        <begin position="32"/>
        <end position="42"/>
    </location>
</feature>
<feature type="compositionally biased region" description="Polar residues" evidence="3">
    <location>
        <begin position="48"/>
        <end position="61"/>
    </location>
</feature>
<feature type="compositionally biased region" description="Low complexity" evidence="3">
    <location>
        <begin position="129"/>
        <end position="142"/>
    </location>
</feature>
<feature type="compositionally biased region" description="Low complexity" evidence="3">
    <location>
        <begin position="327"/>
        <end position="346"/>
    </location>
</feature>
<proteinExistence type="inferred from homology"/>
<keyword id="KW-1185">Reference proteome</keyword>
<keyword id="KW-0833">Ubl conjugation pathway</keyword>
<name>CS111_YARLI</name>
<comment type="function">
    <text evidence="1">F-box protein probably involved in ubiquitin conjugation pathway.</text>
</comment>
<organism>
    <name type="scientific">Yarrowia lipolytica (strain CLIB 122 / E 150)</name>
    <name type="common">Yeast</name>
    <name type="synonym">Candida lipolytica</name>
    <dbReference type="NCBI Taxonomy" id="284591"/>
    <lineage>
        <taxon>Eukaryota</taxon>
        <taxon>Fungi</taxon>
        <taxon>Dikarya</taxon>
        <taxon>Ascomycota</taxon>
        <taxon>Saccharomycotina</taxon>
        <taxon>Dipodascomycetes</taxon>
        <taxon>Dipodascales</taxon>
        <taxon>Dipodascales incertae sedis</taxon>
        <taxon>Yarrowia</taxon>
    </lineage>
</organism>